<gene>
    <name evidence="2" type="primary">rpsL</name>
    <name type="ordered locus">Paes_2069</name>
</gene>
<name>RS12_PROA2</name>
<feature type="chain" id="PRO_1000194209" description="Small ribosomal subunit protein uS12">
    <location>
        <begin position="1"/>
        <end position="128"/>
    </location>
</feature>
<feature type="region of interest" description="Disordered" evidence="3">
    <location>
        <begin position="101"/>
        <end position="128"/>
    </location>
</feature>
<feature type="compositionally biased region" description="Basic residues" evidence="3">
    <location>
        <begin position="113"/>
        <end position="128"/>
    </location>
</feature>
<feature type="modified residue" description="3-methylthioaspartic acid" evidence="1">
    <location>
        <position position="89"/>
    </location>
</feature>
<proteinExistence type="inferred from homology"/>
<keyword id="KW-0488">Methylation</keyword>
<keyword id="KW-0687">Ribonucleoprotein</keyword>
<keyword id="KW-0689">Ribosomal protein</keyword>
<keyword id="KW-0694">RNA-binding</keyword>
<keyword id="KW-0699">rRNA-binding</keyword>
<keyword id="KW-0820">tRNA-binding</keyword>
<dbReference type="EMBL" id="CP001108">
    <property type="protein sequence ID" value="ACF47079.1"/>
    <property type="molecule type" value="Genomic_DNA"/>
</dbReference>
<dbReference type="RefSeq" id="WP_012506611.1">
    <property type="nucleotide sequence ID" value="NC_011059.1"/>
</dbReference>
<dbReference type="SMR" id="B4S5N2"/>
<dbReference type="STRING" id="290512.Paes_2069"/>
<dbReference type="KEGG" id="paa:Paes_2069"/>
<dbReference type="eggNOG" id="COG0048">
    <property type="taxonomic scope" value="Bacteria"/>
</dbReference>
<dbReference type="HOGENOM" id="CLU_104295_1_2_10"/>
<dbReference type="Proteomes" id="UP000002725">
    <property type="component" value="Chromosome"/>
</dbReference>
<dbReference type="GO" id="GO:0015935">
    <property type="term" value="C:small ribosomal subunit"/>
    <property type="evidence" value="ECO:0007669"/>
    <property type="project" value="InterPro"/>
</dbReference>
<dbReference type="GO" id="GO:0019843">
    <property type="term" value="F:rRNA binding"/>
    <property type="evidence" value="ECO:0007669"/>
    <property type="project" value="UniProtKB-UniRule"/>
</dbReference>
<dbReference type="GO" id="GO:0003735">
    <property type="term" value="F:structural constituent of ribosome"/>
    <property type="evidence" value="ECO:0007669"/>
    <property type="project" value="InterPro"/>
</dbReference>
<dbReference type="GO" id="GO:0000049">
    <property type="term" value="F:tRNA binding"/>
    <property type="evidence" value="ECO:0007669"/>
    <property type="project" value="UniProtKB-UniRule"/>
</dbReference>
<dbReference type="GO" id="GO:0006412">
    <property type="term" value="P:translation"/>
    <property type="evidence" value="ECO:0007669"/>
    <property type="project" value="UniProtKB-UniRule"/>
</dbReference>
<dbReference type="CDD" id="cd03368">
    <property type="entry name" value="Ribosomal_S12"/>
    <property type="match status" value="1"/>
</dbReference>
<dbReference type="FunFam" id="2.40.50.140:FF:000001">
    <property type="entry name" value="30S ribosomal protein S12"/>
    <property type="match status" value="1"/>
</dbReference>
<dbReference type="Gene3D" id="2.40.50.140">
    <property type="entry name" value="Nucleic acid-binding proteins"/>
    <property type="match status" value="1"/>
</dbReference>
<dbReference type="HAMAP" id="MF_00403_B">
    <property type="entry name" value="Ribosomal_uS12_B"/>
    <property type="match status" value="1"/>
</dbReference>
<dbReference type="InterPro" id="IPR012340">
    <property type="entry name" value="NA-bd_OB-fold"/>
</dbReference>
<dbReference type="InterPro" id="IPR006032">
    <property type="entry name" value="Ribosomal_uS12"/>
</dbReference>
<dbReference type="InterPro" id="IPR005679">
    <property type="entry name" value="Ribosomal_uS12_bac"/>
</dbReference>
<dbReference type="NCBIfam" id="TIGR00981">
    <property type="entry name" value="rpsL_bact"/>
    <property type="match status" value="1"/>
</dbReference>
<dbReference type="PANTHER" id="PTHR11652">
    <property type="entry name" value="30S RIBOSOMAL PROTEIN S12 FAMILY MEMBER"/>
    <property type="match status" value="1"/>
</dbReference>
<dbReference type="Pfam" id="PF00164">
    <property type="entry name" value="Ribosom_S12_S23"/>
    <property type="match status" value="1"/>
</dbReference>
<dbReference type="PIRSF" id="PIRSF002133">
    <property type="entry name" value="Ribosomal_S12/S23"/>
    <property type="match status" value="1"/>
</dbReference>
<dbReference type="PRINTS" id="PR01034">
    <property type="entry name" value="RIBOSOMALS12"/>
</dbReference>
<dbReference type="SUPFAM" id="SSF50249">
    <property type="entry name" value="Nucleic acid-binding proteins"/>
    <property type="match status" value="1"/>
</dbReference>
<dbReference type="PROSITE" id="PS00055">
    <property type="entry name" value="RIBOSOMAL_S12"/>
    <property type="match status" value="1"/>
</dbReference>
<organism>
    <name type="scientific">Prosthecochloris aestuarii (strain DSM 271 / SK 413)</name>
    <dbReference type="NCBI Taxonomy" id="290512"/>
    <lineage>
        <taxon>Bacteria</taxon>
        <taxon>Pseudomonadati</taxon>
        <taxon>Chlorobiota</taxon>
        <taxon>Chlorobiia</taxon>
        <taxon>Chlorobiales</taxon>
        <taxon>Chlorobiaceae</taxon>
        <taxon>Prosthecochloris</taxon>
    </lineage>
</organism>
<protein>
    <recommendedName>
        <fullName evidence="2">Small ribosomal subunit protein uS12</fullName>
    </recommendedName>
    <alternativeName>
        <fullName evidence="4">30S ribosomal protein S12</fullName>
    </alternativeName>
</protein>
<comment type="function">
    <text evidence="2">With S4 and S5 plays an important role in translational accuracy.</text>
</comment>
<comment type="function">
    <text evidence="2">Interacts with and stabilizes bases of the 16S rRNA that are involved in tRNA selection in the A site and with the mRNA backbone. Located at the interface of the 30S and 50S subunits, it traverses the body of the 30S subunit contacting proteins on the other side and probably holding the rRNA structure together. The combined cluster of proteins S8, S12 and S17 appears to hold together the shoulder and platform of the 30S subunit.</text>
</comment>
<comment type="subunit">
    <text evidence="2">Part of the 30S ribosomal subunit. Contacts proteins S8 and S17. May interact with IF1 in the 30S initiation complex.</text>
</comment>
<comment type="similarity">
    <text evidence="2">Belongs to the universal ribosomal protein uS12 family.</text>
</comment>
<sequence length="128" mass="14069">MPTIQQLIRRGRTTKASKTASPALEKCPQKRGVCTRVYTTTPKKPNSALRKVARVRLSNKIEVTAYIPGEGHNLQEHSIVLIRGGRVKDLPGVRYHIVRGSLDTSGVADRRQGRSKYGAKRPKGAAAK</sequence>
<evidence type="ECO:0000250" key="1"/>
<evidence type="ECO:0000255" key="2">
    <source>
        <dbReference type="HAMAP-Rule" id="MF_00403"/>
    </source>
</evidence>
<evidence type="ECO:0000256" key="3">
    <source>
        <dbReference type="SAM" id="MobiDB-lite"/>
    </source>
</evidence>
<evidence type="ECO:0000305" key="4"/>
<reference key="1">
    <citation type="submission" date="2008-06" db="EMBL/GenBank/DDBJ databases">
        <title>Complete sequence of chromosome of Prosthecochloris aestuarii DSM 271.</title>
        <authorList>
            <consortium name="US DOE Joint Genome Institute"/>
            <person name="Lucas S."/>
            <person name="Copeland A."/>
            <person name="Lapidus A."/>
            <person name="Glavina del Rio T."/>
            <person name="Dalin E."/>
            <person name="Tice H."/>
            <person name="Bruce D."/>
            <person name="Goodwin L."/>
            <person name="Pitluck S."/>
            <person name="Schmutz J."/>
            <person name="Larimer F."/>
            <person name="Land M."/>
            <person name="Hauser L."/>
            <person name="Kyrpides N."/>
            <person name="Anderson I."/>
            <person name="Liu Z."/>
            <person name="Li T."/>
            <person name="Zhao F."/>
            <person name="Overmann J."/>
            <person name="Bryant D.A."/>
            <person name="Richardson P."/>
        </authorList>
    </citation>
    <scope>NUCLEOTIDE SEQUENCE [LARGE SCALE GENOMIC DNA]</scope>
    <source>
        <strain>DSM 271 / SK 413</strain>
    </source>
</reference>
<accession>B4S5N2</accession>